<evidence type="ECO:0000255" key="1">
    <source>
        <dbReference type="HAMAP-Rule" id="MF_00689"/>
    </source>
</evidence>
<dbReference type="EC" id="2.3.2.29" evidence="1"/>
<dbReference type="EMBL" id="CP000681">
    <property type="protein sequence ID" value="ABP75946.1"/>
    <property type="molecule type" value="Genomic_DNA"/>
</dbReference>
<dbReference type="SMR" id="A4Y7L3"/>
<dbReference type="STRING" id="319224.Sputcn32_2225"/>
<dbReference type="KEGG" id="spc:Sputcn32_2225"/>
<dbReference type="eggNOG" id="COG2935">
    <property type="taxonomic scope" value="Bacteria"/>
</dbReference>
<dbReference type="HOGENOM" id="CLU_077607_0_0_6"/>
<dbReference type="GO" id="GO:0005737">
    <property type="term" value="C:cytoplasm"/>
    <property type="evidence" value="ECO:0007669"/>
    <property type="project" value="UniProtKB-SubCell"/>
</dbReference>
<dbReference type="GO" id="GO:0004057">
    <property type="term" value="F:arginyl-tRNA--protein transferase activity"/>
    <property type="evidence" value="ECO:0007669"/>
    <property type="project" value="InterPro"/>
</dbReference>
<dbReference type="GO" id="GO:0008914">
    <property type="term" value="F:leucyl-tRNA--protein transferase activity"/>
    <property type="evidence" value="ECO:0007669"/>
    <property type="project" value="UniProtKB-UniRule"/>
</dbReference>
<dbReference type="GO" id="GO:0071596">
    <property type="term" value="P:ubiquitin-dependent protein catabolic process via the N-end rule pathway"/>
    <property type="evidence" value="ECO:0007669"/>
    <property type="project" value="InterPro"/>
</dbReference>
<dbReference type="HAMAP" id="MF_00689">
    <property type="entry name" value="Bpt"/>
    <property type="match status" value="1"/>
</dbReference>
<dbReference type="InterPro" id="IPR016181">
    <property type="entry name" value="Acyl_CoA_acyltransferase"/>
</dbReference>
<dbReference type="InterPro" id="IPR017138">
    <property type="entry name" value="Asp_Glu_LeuTrfase"/>
</dbReference>
<dbReference type="InterPro" id="IPR030700">
    <property type="entry name" value="N-end_Aminoacyl_Trfase"/>
</dbReference>
<dbReference type="InterPro" id="IPR007472">
    <property type="entry name" value="N-end_Aminoacyl_Trfase_C"/>
</dbReference>
<dbReference type="InterPro" id="IPR007471">
    <property type="entry name" value="N-end_Aminoacyl_Trfase_N"/>
</dbReference>
<dbReference type="NCBIfam" id="NF002342">
    <property type="entry name" value="PRK01305.1-3"/>
    <property type="match status" value="1"/>
</dbReference>
<dbReference type="NCBIfam" id="NF002345">
    <property type="entry name" value="PRK01305.2-2"/>
    <property type="match status" value="1"/>
</dbReference>
<dbReference type="NCBIfam" id="NF002346">
    <property type="entry name" value="PRK01305.2-3"/>
    <property type="match status" value="1"/>
</dbReference>
<dbReference type="NCBIfam" id="NF002347">
    <property type="entry name" value="PRK01305.2-4"/>
    <property type="match status" value="1"/>
</dbReference>
<dbReference type="PANTHER" id="PTHR21367">
    <property type="entry name" value="ARGININE-TRNA-PROTEIN TRANSFERASE 1"/>
    <property type="match status" value="1"/>
</dbReference>
<dbReference type="PANTHER" id="PTHR21367:SF1">
    <property type="entry name" value="ARGINYL-TRNA--PROTEIN TRANSFERASE 1"/>
    <property type="match status" value="1"/>
</dbReference>
<dbReference type="Pfam" id="PF04377">
    <property type="entry name" value="ATE_C"/>
    <property type="match status" value="1"/>
</dbReference>
<dbReference type="Pfam" id="PF04376">
    <property type="entry name" value="ATE_N"/>
    <property type="match status" value="1"/>
</dbReference>
<dbReference type="PIRSF" id="PIRSF037208">
    <property type="entry name" value="ATE_pro_prd"/>
    <property type="match status" value="1"/>
</dbReference>
<dbReference type="SUPFAM" id="SSF55729">
    <property type="entry name" value="Acyl-CoA N-acyltransferases (Nat)"/>
    <property type="match status" value="1"/>
</dbReference>
<accession>A4Y7L3</accession>
<feature type="chain" id="PRO_1000045150" description="Aspartate/glutamate leucyltransferase">
    <location>
        <begin position="1"/>
        <end position="235"/>
    </location>
</feature>
<name>BPT_SHEPC</name>
<comment type="function">
    <text evidence="1">Functions in the N-end rule pathway of protein degradation where it conjugates Leu from its aminoacyl-tRNA to the N-termini of proteins containing an N-terminal aspartate or glutamate.</text>
</comment>
<comment type="catalytic activity">
    <reaction evidence="1">
        <text>N-terminal L-glutamyl-[protein] + L-leucyl-tRNA(Leu) = N-terminal L-leucyl-L-glutamyl-[protein] + tRNA(Leu) + H(+)</text>
        <dbReference type="Rhea" id="RHEA:50412"/>
        <dbReference type="Rhea" id="RHEA-COMP:9613"/>
        <dbReference type="Rhea" id="RHEA-COMP:9622"/>
        <dbReference type="Rhea" id="RHEA-COMP:12664"/>
        <dbReference type="Rhea" id="RHEA-COMP:12668"/>
        <dbReference type="ChEBI" id="CHEBI:15378"/>
        <dbReference type="ChEBI" id="CHEBI:64721"/>
        <dbReference type="ChEBI" id="CHEBI:78442"/>
        <dbReference type="ChEBI" id="CHEBI:78494"/>
        <dbReference type="ChEBI" id="CHEBI:133041"/>
        <dbReference type="EC" id="2.3.2.29"/>
    </reaction>
</comment>
<comment type="catalytic activity">
    <reaction evidence="1">
        <text>N-terminal L-aspartyl-[protein] + L-leucyl-tRNA(Leu) = N-terminal L-leucyl-L-aspartyl-[protein] + tRNA(Leu) + H(+)</text>
        <dbReference type="Rhea" id="RHEA:50420"/>
        <dbReference type="Rhea" id="RHEA-COMP:9613"/>
        <dbReference type="Rhea" id="RHEA-COMP:9622"/>
        <dbReference type="Rhea" id="RHEA-COMP:12669"/>
        <dbReference type="Rhea" id="RHEA-COMP:12674"/>
        <dbReference type="ChEBI" id="CHEBI:15378"/>
        <dbReference type="ChEBI" id="CHEBI:64720"/>
        <dbReference type="ChEBI" id="CHEBI:78442"/>
        <dbReference type="ChEBI" id="CHEBI:78494"/>
        <dbReference type="ChEBI" id="CHEBI:133042"/>
        <dbReference type="EC" id="2.3.2.29"/>
    </reaction>
</comment>
<comment type="subcellular location">
    <subcellularLocation>
        <location evidence="1">Cytoplasm</location>
    </subcellularLocation>
</comment>
<comment type="similarity">
    <text evidence="1">Belongs to the R-transferase family. Bpt subfamily.</text>
</comment>
<sequence>MNSNANKTPIAIGISQIFPCSYLEDQQEQLLVIQEETLDPILFERLLAIGFRRSGSAIYKPRCPRCSACQPIRLPVREFIPSKRQKRTLANNRDLTWRITSSQTDEQYTLYERYIRQRHFDGPMFPPSKEQYEQFLFCHWLPPTFIEVYANNKLIAVAVTDTLPNSLSAIYSYFDPDEAHRSLGVLLILIQCRLAKLQRKEFLYLGYQIDANRKMSYKRLYRPYQILTPQGWEYS</sequence>
<proteinExistence type="inferred from homology"/>
<organism>
    <name type="scientific">Shewanella putrefaciens (strain CN-32 / ATCC BAA-453)</name>
    <dbReference type="NCBI Taxonomy" id="319224"/>
    <lineage>
        <taxon>Bacteria</taxon>
        <taxon>Pseudomonadati</taxon>
        <taxon>Pseudomonadota</taxon>
        <taxon>Gammaproteobacteria</taxon>
        <taxon>Alteromonadales</taxon>
        <taxon>Shewanellaceae</taxon>
        <taxon>Shewanella</taxon>
    </lineage>
</organism>
<gene>
    <name evidence="1" type="primary">bpt</name>
    <name type="ordered locus">Sputcn32_2225</name>
</gene>
<keyword id="KW-0012">Acyltransferase</keyword>
<keyword id="KW-0963">Cytoplasm</keyword>
<keyword id="KW-0808">Transferase</keyword>
<reference key="1">
    <citation type="submission" date="2007-04" db="EMBL/GenBank/DDBJ databases">
        <title>Complete sequence of Shewanella putrefaciens CN-32.</title>
        <authorList>
            <consortium name="US DOE Joint Genome Institute"/>
            <person name="Copeland A."/>
            <person name="Lucas S."/>
            <person name="Lapidus A."/>
            <person name="Barry K."/>
            <person name="Detter J.C."/>
            <person name="Glavina del Rio T."/>
            <person name="Hammon N."/>
            <person name="Israni S."/>
            <person name="Dalin E."/>
            <person name="Tice H."/>
            <person name="Pitluck S."/>
            <person name="Chain P."/>
            <person name="Malfatti S."/>
            <person name="Shin M."/>
            <person name="Vergez L."/>
            <person name="Schmutz J."/>
            <person name="Larimer F."/>
            <person name="Land M."/>
            <person name="Hauser L."/>
            <person name="Kyrpides N."/>
            <person name="Mikhailova N."/>
            <person name="Romine M.F."/>
            <person name="Fredrickson J."/>
            <person name="Tiedje J."/>
            <person name="Richardson P."/>
        </authorList>
    </citation>
    <scope>NUCLEOTIDE SEQUENCE [LARGE SCALE GENOMIC DNA]</scope>
    <source>
        <strain>CN-32 / ATCC BAA-453</strain>
    </source>
</reference>
<protein>
    <recommendedName>
        <fullName evidence="1">Aspartate/glutamate leucyltransferase</fullName>
        <ecNumber evidence="1">2.3.2.29</ecNumber>
    </recommendedName>
</protein>